<reference key="1">
    <citation type="journal article" date="2007" name="J. Bacteriol.">
        <title>The complete genome sequence of the lactic acid bacterial paradigm Lactococcus lactis subsp. cremoris MG1363.</title>
        <authorList>
            <person name="Wegmann U."/>
            <person name="O'Connell-Motherway M."/>
            <person name="Zomer A."/>
            <person name="Buist G."/>
            <person name="Shearman C."/>
            <person name="Canchaya C."/>
            <person name="Ventura M."/>
            <person name="Goesmann A."/>
            <person name="Gasson M.J."/>
            <person name="Kuipers O.P."/>
            <person name="van Sinderen D."/>
            <person name="Kok J."/>
        </authorList>
    </citation>
    <scope>NUCLEOTIDE SEQUENCE [LARGE SCALE GENOMIC DNA]</scope>
    <source>
        <strain>MG1363</strain>
    </source>
</reference>
<gene>
    <name evidence="1" type="primary">nadK</name>
    <name type="ordered locus">llmg_0383</name>
</gene>
<keyword id="KW-0067">ATP-binding</keyword>
<keyword id="KW-0963">Cytoplasm</keyword>
<keyword id="KW-0418">Kinase</keyword>
<keyword id="KW-0520">NAD</keyword>
<keyword id="KW-0521">NADP</keyword>
<keyword id="KW-0547">Nucleotide-binding</keyword>
<keyword id="KW-0808">Transferase</keyword>
<feature type="chain" id="PRO_1000005418" description="NAD kinase">
    <location>
        <begin position="1"/>
        <end position="270"/>
    </location>
</feature>
<feature type="active site" description="Proton acceptor" evidence="1">
    <location>
        <position position="49"/>
    </location>
</feature>
<feature type="binding site" evidence="1">
    <location>
        <begin position="49"/>
        <end position="50"/>
    </location>
    <ligand>
        <name>NAD(+)</name>
        <dbReference type="ChEBI" id="CHEBI:57540"/>
    </ligand>
</feature>
<feature type="binding site" evidence="1">
    <location>
        <position position="54"/>
    </location>
    <ligand>
        <name>NAD(+)</name>
        <dbReference type="ChEBI" id="CHEBI:57540"/>
    </ligand>
</feature>
<feature type="binding site" evidence="1">
    <location>
        <begin position="126"/>
        <end position="127"/>
    </location>
    <ligand>
        <name>NAD(+)</name>
        <dbReference type="ChEBI" id="CHEBI:57540"/>
    </ligand>
</feature>
<feature type="binding site" evidence="1">
    <location>
        <position position="152"/>
    </location>
    <ligand>
        <name>NAD(+)</name>
        <dbReference type="ChEBI" id="CHEBI:57540"/>
    </ligand>
</feature>
<feature type="binding site" evidence="1">
    <location>
        <position position="154"/>
    </location>
    <ligand>
        <name>NAD(+)</name>
        <dbReference type="ChEBI" id="CHEBI:57540"/>
    </ligand>
</feature>
<feature type="binding site" evidence="1">
    <location>
        <begin position="165"/>
        <end position="170"/>
    </location>
    <ligand>
        <name>NAD(+)</name>
        <dbReference type="ChEBI" id="CHEBI:57540"/>
    </ligand>
</feature>
<feature type="binding site" evidence="1">
    <location>
        <position position="189"/>
    </location>
    <ligand>
        <name>NAD(+)</name>
        <dbReference type="ChEBI" id="CHEBI:57540"/>
    </ligand>
</feature>
<feature type="binding site" evidence="1">
    <location>
        <position position="227"/>
    </location>
    <ligand>
        <name>NAD(+)</name>
        <dbReference type="ChEBI" id="CHEBI:57540"/>
    </ligand>
</feature>
<comment type="function">
    <text evidence="1">Involved in the regulation of the intracellular balance of NAD and NADP, and is a key enzyme in the biosynthesis of NADP. Catalyzes specifically the phosphorylation on 2'-hydroxyl of the adenosine moiety of NAD to yield NADP.</text>
</comment>
<comment type="catalytic activity">
    <reaction evidence="1">
        <text>NAD(+) + ATP = ADP + NADP(+) + H(+)</text>
        <dbReference type="Rhea" id="RHEA:18629"/>
        <dbReference type="ChEBI" id="CHEBI:15378"/>
        <dbReference type="ChEBI" id="CHEBI:30616"/>
        <dbReference type="ChEBI" id="CHEBI:57540"/>
        <dbReference type="ChEBI" id="CHEBI:58349"/>
        <dbReference type="ChEBI" id="CHEBI:456216"/>
        <dbReference type="EC" id="2.7.1.23"/>
    </reaction>
</comment>
<comment type="cofactor">
    <cofactor evidence="1">
        <name>a divalent metal cation</name>
        <dbReference type="ChEBI" id="CHEBI:60240"/>
    </cofactor>
</comment>
<comment type="subcellular location">
    <subcellularLocation>
        <location evidence="1">Cytoplasm</location>
    </subcellularLocation>
</comment>
<comment type="similarity">
    <text evidence="1">Belongs to the NAD kinase family.</text>
</comment>
<proteinExistence type="inferred from homology"/>
<evidence type="ECO:0000255" key="1">
    <source>
        <dbReference type="HAMAP-Rule" id="MF_00361"/>
    </source>
</evidence>
<name>NADK_LACLM</name>
<sequence>MNFGKKVWLIGNSSEKSKKTLNKLSKILKAEHFVFDDINPEIVISVGGDGTLLRAMHMYEYQLDRVRFLGVHTGHLGFYTDFTDEDLFEVVEALYDENPAQAIHYPLICVQVSFTDGYQIVRHVLNEATIRRASKTMVGDVRISDYLFERFRGDGLSISTPTGSTAYNKSIGGAVVHPRVKAMQIAEIASLNNVVYRTLGSPMIVAEKDTITVCPAPEDDYSLTFDQLTFEYKNIKSIEFSLDGTTISFANCAHTPFWERVSKSFIGEVE</sequence>
<protein>
    <recommendedName>
        <fullName evidence="1">NAD kinase</fullName>
        <ecNumber evidence="1">2.7.1.23</ecNumber>
    </recommendedName>
    <alternativeName>
        <fullName evidence="1">ATP-dependent NAD kinase</fullName>
    </alternativeName>
</protein>
<accession>A2RI94</accession>
<dbReference type="EC" id="2.7.1.23" evidence="1"/>
<dbReference type="EMBL" id="AM406671">
    <property type="protein sequence ID" value="CAL96988.1"/>
    <property type="molecule type" value="Genomic_DNA"/>
</dbReference>
<dbReference type="RefSeq" id="WP_011834436.1">
    <property type="nucleotide sequence ID" value="NC_009004.1"/>
</dbReference>
<dbReference type="SMR" id="A2RI94"/>
<dbReference type="STRING" id="416870.llmg_0383"/>
<dbReference type="KEGG" id="llm:llmg_0383"/>
<dbReference type="eggNOG" id="COG0061">
    <property type="taxonomic scope" value="Bacteria"/>
</dbReference>
<dbReference type="HOGENOM" id="CLU_008831_0_3_9"/>
<dbReference type="OrthoDB" id="9774737at2"/>
<dbReference type="PhylomeDB" id="A2RI94"/>
<dbReference type="Proteomes" id="UP000000364">
    <property type="component" value="Chromosome"/>
</dbReference>
<dbReference type="GO" id="GO:0005737">
    <property type="term" value="C:cytoplasm"/>
    <property type="evidence" value="ECO:0007669"/>
    <property type="project" value="UniProtKB-SubCell"/>
</dbReference>
<dbReference type="GO" id="GO:0005524">
    <property type="term" value="F:ATP binding"/>
    <property type="evidence" value="ECO:0007669"/>
    <property type="project" value="UniProtKB-KW"/>
</dbReference>
<dbReference type="GO" id="GO:0046872">
    <property type="term" value="F:metal ion binding"/>
    <property type="evidence" value="ECO:0007669"/>
    <property type="project" value="UniProtKB-UniRule"/>
</dbReference>
<dbReference type="GO" id="GO:0051287">
    <property type="term" value="F:NAD binding"/>
    <property type="evidence" value="ECO:0007669"/>
    <property type="project" value="UniProtKB-ARBA"/>
</dbReference>
<dbReference type="GO" id="GO:0003951">
    <property type="term" value="F:NAD+ kinase activity"/>
    <property type="evidence" value="ECO:0007669"/>
    <property type="project" value="UniProtKB-UniRule"/>
</dbReference>
<dbReference type="GO" id="GO:0019674">
    <property type="term" value="P:NAD metabolic process"/>
    <property type="evidence" value="ECO:0007669"/>
    <property type="project" value="InterPro"/>
</dbReference>
<dbReference type="GO" id="GO:0006741">
    <property type="term" value="P:NADP biosynthetic process"/>
    <property type="evidence" value="ECO:0007669"/>
    <property type="project" value="UniProtKB-UniRule"/>
</dbReference>
<dbReference type="Gene3D" id="3.40.50.10330">
    <property type="entry name" value="Probable inorganic polyphosphate/atp-NAD kinase, domain 1"/>
    <property type="match status" value="1"/>
</dbReference>
<dbReference type="Gene3D" id="2.60.200.30">
    <property type="entry name" value="Probable inorganic polyphosphate/atp-NAD kinase, domain 2"/>
    <property type="match status" value="1"/>
</dbReference>
<dbReference type="HAMAP" id="MF_00361">
    <property type="entry name" value="NAD_kinase"/>
    <property type="match status" value="1"/>
</dbReference>
<dbReference type="InterPro" id="IPR017438">
    <property type="entry name" value="ATP-NAD_kinase_N"/>
</dbReference>
<dbReference type="InterPro" id="IPR017437">
    <property type="entry name" value="ATP-NAD_kinase_PpnK-typ_C"/>
</dbReference>
<dbReference type="InterPro" id="IPR016064">
    <property type="entry name" value="NAD/diacylglycerol_kinase_sf"/>
</dbReference>
<dbReference type="InterPro" id="IPR002504">
    <property type="entry name" value="NADK"/>
</dbReference>
<dbReference type="NCBIfam" id="NF003424">
    <property type="entry name" value="PRK04885.1"/>
    <property type="match status" value="1"/>
</dbReference>
<dbReference type="PANTHER" id="PTHR20275">
    <property type="entry name" value="NAD KINASE"/>
    <property type="match status" value="1"/>
</dbReference>
<dbReference type="PANTHER" id="PTHR20275:SF0">
    <property type="entry name" value="NAD KINASE"/>
    <property type="match status" value="1"/>
</dbReference>
<dbReference type="Pfam" id="PF01513">
    <property type="entry name" value="NAD_kinase"/>
    <property type="match status" value="1"/>
</dbReference>
<dbReference type="Pfam" id="PF20143">
    <property type="entry name" value="NAD_kinase_C"/>
    <property type="match status" value="1"/>
</dbReference>
<dbReference type="SUPFAM" id="SSF111331">
    <property type="entry name" value="NAD kinase/diacylglycerol kinase-like"/>
    <property type="match status" value="1"/>
</dbReference>
<organism>
    <name type="scientific">Lactococcus lactis subsp. cremoris (strain MG1363)</name>
    <dbReference type="NCBI Taxonomy" id="416870"/>
    <lineage>
        <taxon>Bacteria</taxon>
        <taxon>Bacillati</taxon>
        <taxon>Bacillota</taxon>
        <taxon>Bacilli</taxon>
        <taxon>Lactobacillales</taxon>
        <taxon>Streptococcaceae</taxon>
        <taxon>Lactococcus</taxon>
        <taxon>Lactococcus cremoris subsp. cremoris</taxon>
    </lineage>
</organism>